<reference key="1">
    <citation type="submission" date="1998-04" db="EMBL/GenBank/DDBJ databases">
        <authorList>
            <person name="Xiong Y.-M."/>
            <person name="Ling M.-H."/>
            <person name="Wang D.-C."/>
            <person name="Chi C.-W."/>
        </authorList>
    </citation>
    <scope>NUCLEOTIDE SEQUENCE [GENOMIC DNA]</scope>
    <source>
        <tissue>Venom gland</tissue>
    </source>
</reference>
<reference key="2">
    <citation type="journal article" date="2000" name="Toxicon">
        <title>Nine novel precursors of Buthus martensii scorpion alpha-toxin homologues.</title>
        <authorList>
            <person name="Zhu S.-Y."/>
            <person name="Li W.-X."/>
            <person name="Zeng X.-C."/>
            <person name="Liu H."/>
            <person name="Jiang D.-H."/>
            <person name="Mao X."/>
        </authorList>
    </citation>
    <scope>NUCLEOTIDE SEQUENCE [MRNA]</scope>
    <source>
        <tissue>Venom gland</tissue>
    </source>
</reference>
<reference key="3">
    <citation type="journal article" date="2004" name="J. Pept. Res.">
        <title>Purification and characterization of a new peptide with analgesic effect from the scorpion Buthus martensi Karch.</title>
        <authorList>
            <person name="Cao Z.Y."/>
            <person name="Mi Z.M."/>
            <person name="Cheng G.F."/>
            <person name="Shen W.Q."/>
            <person name="Xiao X."/>
            <person name="Liu X.M."/>
            <person name="Liang X.T."/>
            <person name="Yu D.Q."/>
        </authorList>
    </citation>
    <scope>PROTEIN SEQUENCE OF 20-83</scope>
    <scope>FUNCTION</scope>
    <scope>SUBCELLULAR LOCATION</scope>
    <scope>MASS SPECTROMETRY</scope>
</reference>
<proteinExistence type="evidence at protein level"/>
<protein>
    <recommendedName>
        <fullName>Neurotoxin BmK-M10</fullName>
    </recommendedName>
    <alternativeName>
        <fullName>Alpha-neurotoxin TX9</fullName>
    </alternativeName>
    <alternativeName>
        <fullName evidence="3">BmK AngM1</fullName>
    </alternativeName>
    <alternativeName>
        <fullName>BmK-X</fullName>
        <shortName>BmKX</shortName>
    </alternativeName>
    <alternativeName>
        <fullName>BmK10</fullName>
    </alternativeName>
    <alternativeName>
        <fullName>BmKalphaTx9</fullName>
    </alternativeName>
    <alternativeName>
        <fullName>Bmk M10</fullName>
        <shortName>BmkM10</shortName>
    </alternativeName>
    <alternativeName>
        <fullName>Neurotoxin M10</fullName>
    </alternativeName>
</protein>
<accession>O61705</accession>
<dbReference type="EMBL" id="AF062563">
    <property type="protein sequence ID" value="AAC16697.1"/>
    <property type="molecule type" value="Genomic_DNA"/>
</dbReference>
<dbReference type="EMBL" id="AF164203">
    <property type="protein sequence ID" value="AAK06898.1"/>
    <property type="molecule type" value="mRNA"/>
</dbReference>
<dbReference type="PDB" id="2KBK">
    <property type="method" value="NMR"/>
    <property type="chains" value="A=20-83"/>
</dbReference>
<dbReference type="PDBsum" id="2KBK"/>
<dbReference type="SMR" id="O61705"/>
<dbReference type="EvolutionaryTrace" id="O61705"/>
<dbReference type="GO" id="GO:0005576">
    <property type="term" value="C:extracellular region"/>
    <property type="evidence" value="ECO:0000314"/>
    <property type="project" value="UniProtKB"/>
</dbReference>
<dbReference type="GO" id="GO:0019870">
    <property type="term" value="F:potassium channel inhibitor activity"/>
    <property type="evidence" value="ECO:0000314"/>
    <property type="project" value="UniProtKB"/>
</dbReference>
<dbReference type="GO" id="GO:0019871">
    <property type="term" value="F:sodium channel inhibitor activity"/>
    <property type="evidence" value="ECO:0000314"/>
    <property type="project" value="UniProtKB"/>
</dbReference>
<dbReference type="GO" id="GO:0090729">
    <property type="term" value="F:toxin activity"/>
    <property type="evidence" value="ECO:0000314"/>
    <property type="project" value="UniProtKB"/>
</dbReference>
<dbReference type="GO" id="GO:0006952">
    <property type="term" value="P:defense response"/>
    <property type="evidence" value="ECO:0007669"/>
    <property type="project" value="InterPro"/>
</dbReference>
<dbReference type="GO" id="GO:0044493">
    <property type="term" value="P:envenomation resulting in negative regulation of voltage-gated sodium channel activity in another organism"/>
    <property type="evidence" value="ECO:0000314"/>
    <property type="project" value="UniProtKB"/>
</dbReference>
<dbReference type="CDD" id="cd23106">
    <property type="entry name" value="neurotoxins_LC_scorpion"/>
    <property type="match status" value="1"/>
</dbReference>
<dbReference type="FunFam" id="3.30.30.10:FF:000002">
    <property type="entry name" value="Alpha-like toxin BmK-M1"/>
    <property type="match status" value="1"/>
</dbReference>
<dbReference type="Gene3D" id="3.30.30.10">
    <property type="entry name" value="Knottin, scorpion toxin-like"/>
    <property type="match status" value="1"/>
</dbReference>
<dbReference type="InterPro" id="IPR044062">
    <property type="entry name" value="LCN-type_CS_alpha_beta_dom"/>
</dbReference>
<dbReference type="InterPro" id="IPR003614">
    <property type="entry name" value="Scorpion_toxin-like"/>
</dbReference>
<dbReference type="InterPro" id="IPR036574">
    <property type="entry name" value="Scorpion_toxin-like_sf"/>
</dbReference>
<dbReference type="InterPro" id="IPR018218">
    <property type="entry name" value="Scorpion_toxinL"/>
</dbReference>
<dbReference type="InterPro" id="IPR002061">
    <property type="entry name" value="Scorpion_toxinL/defensin"/>
</dbReference>
<dbReference type="Pfam" id="PF00537">
    <property type="entry name" value="Toxin_3"/>
    <property type="match status" value="1"/>
</dbReference>
<dbReference type="PRINTS" id="PR00285">
    <property type="entry name" value="SCORPNTOXIN"/>
</dbReference>
<dbReference type="SMART" id="SM00505">
    <property type="entry name" value="Knot1"/>
    <property type="match status" value="1"/>
</dbReference>
<dbReference type="SUPFAM" id="SSF57095">
    <property type="entry name" value="Scorpion toxin-like"/>
    <property type="match status" value="1"/>
</dbReference>
<dbReference type="PROSITE" id="PS51863">
    <property type="entry name" value="LCN_CSAB"/>
    <property type="match status" value="1"/>
</dbReference>
<keyword id="KW-0002">3D-structure</keyword>
<keyword id="KW-0903">Direct protein sequencing</keyword>
<keyword id="KW-1015">Disulfide bond</keyword>
<keyword id="KW-0872">Ion channel impairing toxin</keyword>
<keyword id="KW-0528">Neurotoxin</keyword>
<keyword id="KW-0964">Secreted</keyword>
<keyword id="KW-0732">Signal</keyword>
<keyword id="KW-0800">Toxin</keyword>
<keyword id="KW-0738">Voltage-gated sodium channel impairing toxin</keyword>
<sequence>MNYLVMISFALLLMKGVESVRDAYIAKPENCVYECGITQDCNKLCTENGAESGYCQWGGKYGNACWCIKLPDSVPIRVPGKCQR</sequence>
<organism>
    <name type="scientific">Olivierus martensii</name>
    <name type="common">Manchurian scorpion</name>
    <name type="synonym">Mesobuthus martensii</name>
    <dbReference type="NCBI Taxonomy" id="34649"/>
    <lineage>
        <taxon>Eukaryota</taxon>
        <taxon>Metazoa</taxon>
        <taxon>Ecdysozoa</taxon>
        <taxon>Arthropoda</taxon>
        <taxon>Chelicerata</taxon>
        <taxon>Arachnida</taxon>
        <taxon>Scorpiones</taxon>
        <taxon>Buthida</taxon>
        <taxon>Buthoidea</taxon>
        <taxon>Buthidae</taxon>
        <taxon>Olivierus</taxon>
    </lineage>
</organism>
<evidence type="ECO:0000255" key="1">
    <source>
        <dbReference type="PROSITE-ProRule" id="PRU01210"/>
    </source>
</evidence>
<evidence type="ECO:0000269" key="2">
    <source>
    </source>
</evidence>
<evidence type="ECO:0000303" key="3">
    <source>
    </source>
</evidence>
<evidence type="ECO:0000305" key="4"/>
<evidence type="ECO:0000305" key="5">
    <source>
    </source>
</evidence>
<evidence type="ECO:0007744" key="6">
    <source>
        <dbReference type="PDB" id="2KBK"/>
    </source>
</evidence>
<evidence type="ECO:0007829" key="7">
    <source>
        <dbReference type="PDB" id="2KBK"/>
    </source>
</evidence>
<comment type="function">
    <text evidence="2">Binds to voltage-dependent sodium channels (Nav) and voltage-dependent delayed rectifier potassium channels and inhibits the inactivation of the activated channels, thereby blocking neuronal transmission. Administration to mice at a dosage of 0.8 mg/kg produces an analgesic effect.</text>
</comment>
<comment type="subcellular location">
    <subcellularLocation>
        <location evidence="2">Secreted</location>
    </subcellularLocation>
</comment>
<comment type="tissue specificity">
    <text evidence="5">Expressed by the venom gland.</text>
</comment>
<comment type="domain">
    <text evidence="4">Has the structural arrangement of an alpha-helix connected to antiparallel beta-sheets by disulfide bonds (CS-alpha/beta).</text>
</comment>
<comment type="mass spectrometry"/>
<comment type="similarity">
    <text evidence="4">Belongs to the long (4 C-C) scorpion toxin superfamily. Sodium channel inhibitor family. Alpha subfamily.</text>
</comment>
<feature type="signal peptide" evidence="2">
    <location>
        <begin position="1"/>
        <end position="19"/>
    </location>
</feature>
<feature type="chain" id="PRO_0000035240" description="Neurotoxin BmK-M10" evidence="2">
    <location>
        <begin position="20"/>
        <end position="83"/>
    </location>
</feature>
<feature type="propeptide" id="PRO_0000035241" description="Removed by a carboxypeptidase">
    <location>
        <position position="84"/>
    </location>
</feature>
<feature type="domain" description="LCN-type CS-alpha/beta" evidence="1">
    <location>
        <begin position="21"/>
        <end position="83"/>
    </location>
</feature>
<feature type="disulfide bond" evidence="6">
    <location>
        <begin position="31"/>
        <end position="82"/>
    </location>
</feature>
<feature type="disulfide bond" evidence="6">
    <location>
        <begin position="35"/>
        <end position="55"/>
    </location>
</feature>
<feature type="disulfide bond" evidence="6">
    <location>
        <begin position="41"/>
        <end position="65"/>
    </location>
</feature>
<feature type="disulfide bond" evidence="6">
    <location>
        <begin position="45"/>
        <end position="67"/>
    </location>
</feature>
<feature type="strand" evidence="7">
    <location>
        <begin position="21"/>
        <end position="23"/>
    </location>
</feature>
<feature type="turn" evidence="7">
    <location>
        <begin position="28"/>
        <end position="30"/>
    </location>
</feature>
<feature type="strand" evidence="7">
    <location>
        <begin position="36"/>
        <end position="38"/>
    </location>
</feature>
<feature type="helix" evidence="7">
    <location>
        <begin position="41"/>
        <end position="48"/>
    </location>
</feature>
<feature type="strand" evidence="7">
    <location>
        <begin position="51"/>
        <end position="59"/>
    </location>
</feature>
<feature type="strand" evidence="7">
    <location>
        <begin position="62"/>
        <end position="70"/>
    </location>
</feature>
<name>SCXA_OLIMR</name>